<name>ATG5_SCLS1</name>
<comment type="function">
    <text evidence="1">Involved in cytoplasm to vacuole transport (Cvt) and autophagic vesicle formation. Autophagy is essential for maintenance of amino acid levels and protein synthesis under nitrogen starvation. Required for selective autophagic degradation of the nucleus (nucleophagy). Also required for mitophagy, which eliminates defective or superfluous mitochondria in order to fulfill cellular energy requirements and prevent excess ROS production. Conjugation with atg12, through a ubiquitin-like conjugating system involving atg7 as an E1-like activating enzyme and atg10 as an E2-like conjugating enzyme, is essential for its function. The atg12-atg5 conjugate acts as an E3-like enzyme which is required for lipidation of atg8 and atg8 association to the vesicle membranes (By similarity).</text>
</comment>
<comment type="subunit">
    <text evidence="1">Conjugated with atg12.</text>
</comment>
<comment type="subcellular location">
    <subcellularLocation>
        <location evidence="1">Preautophagosomal structure membrane</location>
        <topology evidence="1">Peripheral membrane protein</topology>
    </subcellularLocation>
</comment>
<comment type="PTM">
    <text evidence="1">Conjugated to atg12; which is essential for autophagy.</text>
</comment>
<comment type="similarity">
    <text evidence="3">Belongs to the ATG5 family.</text>
</comment>
<protein>
    <recommendedName>
        <fullName>Autophagy protein 5</fullName>
    </recommendedName>
</protein>
<organism>
    <name type="scientific">Sclerotinia sclerotiorum (strain ATCC 18683 / 1980 / Ss-1)</name>
    <name type="common">White mold</name>
    <name type="synonym">Whetzelinia sclerotiorum</name>
    <dbReference type="NCBI Taxonomy" id="665079"/>
    <lineage>
        <taxon>Eukaryota</taxon>
        <taxon>Fungi</taxon>
        <taxon>Dikarya</taxon>
        <taxon>Ascomycota</taxon>
        <taxon>Pezizomycotina</taxon>
        <taxon>Leotiomycetes</taxon>
        <taxon>Helotiales</taxon>
        <taxon>Sclerotiniaceae</taxon>
        <taxon>Sclerotinia</taxon>
    </lineage>
</organism>
<keyword id="KW-0072">Autophagy</keyword>
<keyword id="KW-1017">Isopeptide bond</keyword>
<keyword id="KW-0472">Membrane</keyword>
<keyword id="KW-0653">Protein transport</keyword>
<keyword id="KW-1185">Reference proteome</keyword>
<keyword id="KW-0813">Transport</keyword>
<keyword id="KW-0832">Ubl conjugation</keyword>
<proteinExistence type="inferred from homology"/>
<sequence>MQSLIWASAIPLYITHSSSTIPYLINVPRVSYLALLFPRLTSFFGENVSSFSYEGILLKNLPVGLLCDLYQPELPWRIELGDGPLFDIHDTFINSVKEADFMRNGNAKGIMSMSKEHSTQLWNSVQDNDFSTYHKISTILLNPATALKHIPLRIYLPSSSTPSSTPHPGSSGSSKAPSTASPPSPLFTFKTIQTLIQPQTTSREPQTLGGALNSVLPTLFPSKRDAILAEVILHGATVPFKAVLEDLMREASYADGWLNVCVVMLN</sequence>
<evidence type="ECO:0000250" key="1"/>
<evidence type="ECO:0000256" key="2">
    <source>
        <dbReference type="SAM" id="MobiDB-lite"/>
    </source>
</evidence>
<evidence type="ECO:0000305" key="3"/>
<dbReference type="EMBL" id="CH476626">
    <property type="protein sequence ID" value="EDO02982.1"/>
    <property type="molecule type" value="Genomic_DNA"/>
</dbReference>
<dbReference type="RefSeq" id="XP_001594031.1">
    <property type="nucleotide sequence ID" value="XM_001593981.1"/>
</dbReference>
<dbReference type="SMR" id="A7EJG6"/>
<dbReference type="STRING" id="665079.A7EJG6"/>
<dbReference type="EnsemblFungi" id="EDO02982">
    <property type="protein sequence ID" value="EDO02982"/>
    <property type="gene ID" value="SS1G_05459"/>
</dbReference>
<dbReference type="GeneID" id="5489984"/>
<dbReference type="KEGG" id="ssl:SS1G_05459"/>
<dbReference type="VEuPathDB" id="FungiDB:sscle_08g066910"/>
<dbReference type="eggNOG" id="KOG2976">
    <property type="taxonomic scope" value="Eukaryota"/>
</dbReference>
<dbReference type="HOGENOM" id="CLU_051894_2_0_1"/>
<dbReference type="InParanoid" id="A7EJG6"/>
<dbReference type="OMA" id="SIQKAVW"/>
<dbReference type="OrthoDB" id="272162at2759"/>
<dbReference type="Proteomes" id="UP000001312">
    <property type="component" value="Unassembled WGS sequence"/>
</dbReference>
<dbReference type="GO" id="GO:0034274">
    <property type="term" value="C:Atg12-Atg5-Atg16 complex"/>
    <property type="evidence" value="ECO:0000318"/>
    <property type="project" value="GO_Central"/>
</dbReference>
<dbReference type="GO" id="GO:0005776">
    <property type="term" value="C:autophagosome"/>
    <property type="evidence" value="ECO:0000318"/>
    <property type="project" value="GO_Central"/>
</dbReference>
<dbReference type="GO" id="GO:0061908">
    <property type="term" value="C:phagophore"/>
    <property type="evidence" value="ECO:0000318"/>
    <property type="project" value="GO_Central"/>
</dbReference>
<dbReference type="GO" id="GO:0034045">
    <property type="term" value="C:phagophore assembly site membrane"/>
    <property type="evidence" value="ECO:0000318"/>
    <property type="project" value="GO_Central"/>
</dbReference>
<dbReference type="GO" id="GO:0035973">
    <property type="term" value="P:aggrephagy"/>
    <property type="evidence" value="ECO:0000318"/>
    <property type="project" value="GO_Central"/>
</dbReference>
<dbReference type="GO" id="GO:0000045">
    <property type="term" value="P:autophagosome assembly"/>
    <property type="evidence" value="ECO:0000318"/>
    <property type="project" value="GO_Central"/>
</dbReference>
<dbReference type="GO" id="GO:0006995">
    <property type="term" value="P:cellular response to nitrogen starvation"/>
    <property type="evidence" value="ECO:0000318"/>
    <property type="project" value="GO_Central"/>
</dbReference>
<dbReference type="GO" id="GO:0000423">
    <property type="term" value="P:mitophagy"/>
    <property type="evidence" value="ECO:0000318"/>
    <property type="project" value="GO_Central"/>
</dbReference>
<dbReference type="GO" id="GO:0034727">
    <property type="term" value="P:piecemeal microautophagy of the nucleus"/>
    <property type="evidence" value="ECO:0000318"/>
    <property type="project" value="GO_Central"/>
</dbReference>
<dbReference type="GO" id="GO:0015031">
    <property type="term" value="P:protein transport"/>
    <property type="evidence" value="ECO:0007669"/>
    <property type="project" value="UniProtKB-KW"/>
</dbReference>
<dbReference type="FunFam" id="1.10.246.190:FF:000004">
    <property type="entry name" value="Autophagy protein 5"/>
    <property type="match status" value="1"/>
</dbReference>
<dbReference type="FunFam" id="3.10.20.620:FF:000008">
    <property type="entry name" value="Autophagy protein 5"/>
    <property type="match status" value="1"/>
</dbReference>
<dbReference type="Gene3D" id="3.10.20.620">
    <property type="match status" value="1"/>
</dbReference>
<dbReference type="Gene3D" id="1.10.246.190">
    <property type="entry name" value="Autophagy protein Apg5, helix rich domain"/>
    <property type="match status" value="1"/>
</dbReference>
<dbReference type="Gene3D" id="3.10.20.90">
    <property type="entry name" value="Phosphatidylinositol 3-kinase Catalytic Subunit, Chain A, domain 1"/>
    <property type="match status" value="1"/>
</dbReference>
<dbReference type="InterPro" id="IPR007239">
    <property type="entry name" value="Atg5"/>
</dbReference>
<dbReference type="InterPro" id="IPR048940">
    <property type="entry name" value="ATG5_HBR"/>
</dbReference>
<dbReference type="InterPro" id="IPR042526">
    <property type="entry name" value="Atg5_HR"/>
</dbReference>
<dbReference type="InterPro" id="IPR048939">
    <property type="entry name" value="ATG5_UblA"/>
</dbReference>
<dbReference type="InterPro" id="IPR042527">
    <property type="entry name" value="Atg5_UblA_dom_sf"/>
</dbReference>
<dbReference type="InterPro" id="IPR048318">
    <property type="entry name" value="ATG5_UblB"/>
</dbReference>
<dbReference type="PANTHER" id="PTHR13040">
    <property type="entry name" value="AUTOPHAGY PROTEIN 5"/>
    <property type="match status" value="1"/>
</dbReference>
<dbReference type="PANTHER" id="PTHR13040:SF2">
    <property type="entry name" value="AUTOPHAGY PROTEIN 5"/>
    <property type="match status" value="1"/>
</dbReference>
<dbReference type="Pfam" id="PF20637">
    <property type="entry name" value="ATG5_HBR"/>
    <property type="match status" value="1"/>
</dbReference>
<dbReference type="Pfam" id="PF20638">
    <property type="entry name" value="ATG5_UblA"/>
    <property type="match status" value="1"/>
</dbReference>
<dbReference type="Pfam" id="PF04106">
    <property type="entry name" value="ATG5_UblB"/>
    <property type="match status" value="1"/>
</dbReference>
<accession>A7EJG6</accession>
<reference key="1">
    <citation type="journal article" date="2011" name="PLoS Genet.">
        <title>Genomic analysis of the necrotrophic fungal pathogens Sclerotinia sclerotiorum and Botrytis cinerea.</title>
        <authorList>
            <person name="Amselem J."/>
            <person name="Cuomo C.A."/>
            <person name="van Kan J.A.L."/>
            <person name="Viaud M."/>
            <person name="Benito E.P."/>
            <person name="Couloux A."/>
            <person name="Coutinho P.M."/>
            <person name="de Vries R.P."/>
            <person name="Dyer P.S."/>
            <person name="Fillinger S."/>
            <person name="Fournier E."/>
            <person name="Gout L."/>
            <person name="Hahn M."/>
            <person name="Kohn L."/>
            <person name="Lapalu N."/>
            <person name="Plummer K.M."/>
            <person name="Pradier J.-M."/>
            <person name="Quevillon E."/>
            <person name="Sharon A."/>
            <person name="Simon A."/>
            <person name="ten Have A."/>
            <person name="Tudzynski B."/>
            <person name="Tudzynski P."/>
            <person name="Wincker P."/>
            <person name="Andrew M."/>
            <person name="Anthouard V."/>
            <person name="Beever R.E."/>
            <person name="Beffa R."/>
            <person name="Benoit I."/>
            <person name="Bouzid O."/>
            <person name="Brault B."/>
            <person name="Chen Z."/>
            <person name="Choquer M."/>
            <person name="Collemare J."/>
            <person name="Cotton P."/>
            <person name="Danchin E.G."/>
            <person name="Da Silva C."/>
            <person name="Gautier A."/>
            <person name="Giraud C."/>
            <person name="Giraud T."/>
            <person name="Gonzalez C."/>
            <person name="Grossetete S."/>
            <person name="Gueldener U."/>
            <person name="Henrissat B."/>
            <person name="Howlett B.J."/>
            <person name="Kodira C."/>
            <person name="Kretschmer M."/>
            <person name="Lappartient A."/>
            <person name="Leroch M."/>
            <person name="Levis C."/>
            <person name="Mauceli E."/>
            <person name="Neuveglise C."/>
            <person name="Oeser B."/>
            <person name="Pearson M."/>
            <person name="Poulain J."/>
            <person name="Poussereau N."/>
            <person name="Quesneville H."/>
            <person name="Rascle C."/>
            <person name="Schumacher J."/>
            <person name="Segurens B."/>
            <person name="Sexton A."/>
            <person name="Silva E."/>
            <person name="Sirven C."/>
            <person name="Soanes D.M."/>
            <person name="Talbot N.J."/>
            <person name="Templeton M."/>
            <person name="Yandava C."/>
            <person name="Yarden O."/>
            <person name="Zeng Q."/>
            <person name="Rollins J.A."/>
            <person name="Lebrun M.-H."/>
            <person name="Dickman M."/>
        </authorList>
    </citation>
    <scope>NUCLEOTIDE SEQUENCE [LARGE SCALE GENOMIC DNA]</scope>
    <source>
        <strain>ATCC 18683 / 1980 / Ss-1</strain>
    </source>
</reference>
<feature type="chain" id="PRO_0000317862" description="Autophagy protein 5">
    <location>
        <begin position="1"/>
        <end position="266"/>
    </location>
</feature>
<feature type="region of interest" description="Disordered" evidence="2">
    <location>
        <begin position="158"/>
        <end position="182"/>
    </location>
</feature>
<feature type="compositionally biased region" description="Low complexity" evidence="2">
    <location>
        <begin position="158"/>
        <end position="179"/>
    </location>
</feature>
<feature type="cross-link" description="Glycyl lysine isopeptide (Lys-Gly) (interchain with G-Cter in atg12)" evidence="1">
    <location>
        <position position="97"/>
    </location>
</feature>
<gene>
    <name type="primary">atg5</name>
    <name type="ORF">SS1G_05459</name>
</gene>